<dbReference type="EMBL" id="AF381039">
    <property type="protein sequence ID" value="ABG46427.1"/>
    <property type="molecule type" value="Genomic_DNA"/>
</dbReference>
<dbReference type="EMBL" id="CP000951">
    <property type="protein sequence ID" value="ACB00349.1"/>
    <property type="molecule type" value="Genomic_DNA"/>
</dbReference>
<dbReference type="RefSeq" id="WP_012307967.1">
    <property type="nucleotide sequence ID" value="NZ_JAHHPU010000003.1"/>
</dbReference>
<dbReference type="SMR" id="Q14SY0"/>
<dbReference type="STRING" id="32049.SYNPCC7002_A2371"/>
<dbReference type="TCDB" id="2.A.53.3.3">
    <property type="family name" value="the sulfate permease (sulp) family"/>
</dbReference>
<dbReference type="KEGG" id="syp:SYNPCC7002_A2371"/>
<dbReference type="eggNOG" id="COG0659">
    <property type="taxonomic scope" value="Bacteria"/>
</dbReference>
<dbReference type="HOGENOM" id="CLU_003182_13_1_3"/>
<dbReference type="Proteomes" id="UP000001688">
    <property type="component" value="Chromosome"/>
</dbReference>
<dbReference type="GO" id="GO:0005886">
    <property type="term" value="C:plasma membrane"/>
    <property type="evidence" value="ECO:0000314"/>
    <property type="project" value="UniProtKB"/>
</dbReference>
<dbReference type="GO" id="GO:0015106">
    <property type="term" value="F:bicarbonate transmembrane transporter activity"/>
    <property type="evidence" value="ECO:0000314"/>
    <property type="project" value="UniProtKB"/>
</dbReference>
<dbReference type="GO" id="GO:0046872">
    <property type="term" value="F:metal ion binding"/>
    <property type="evidence" value="ECO:0007669"/>
    <property type="project" value="UniProtKB-KW"/>
</dbReference>
<dbReference type="GO" id="GO:0015701">
    <property type="term" value="P:bicarbonate transport"/>
    <property type="evidence" value="ECO:0000314"/>
    <property type="project" value="UniProtKB"/>
</dbReference>
<dbReference type="GO" id="GO:0006814">
    <property type="term" value="P:sodium ion transport"/>
    <property type="evidence" value="ECO:0007669"/>
    <property type="project" value="UniProtKB-KW"/>
</dbReference>
<dbReference type="CDD" id="cd07042">
    <property type="entry name" value="STAS_SulP_like_sulfate_transporter"/>
    <property type="match status" value="1"/>
</dbReference>
<dbReference type="Gene3D" id="3.30.750.24">
    <property type="entry name" value="STAS domain"/>
    <property type="match status" value="1"/>
</dbReference>
<dbReference type="InterPro" id="IPR011547">
    <property type="entry name" value="SLC26A/SulP_dom"/>
</dbReference>
<dbReference type="InterPro" id="IPR001902">
    <property type="entry name" value="SLC26A/SulP_fam"/>
</dbReference>
<dbReference type="InterPro" id="IPR002645">
    <property type="entry name" value="STAS_dom"/>
</dbReference>
<dbReference type="InterPro" id="IPR036513">
    <property type="entry name" value="STAS_dom_sf"/>
</dbReference>
<dbReference type="PANTHER" id="PTHR11814">
    <property type="entry name" value="SULFATE TRANSPORTER"/>
    <property type="match status" value="1"/>
</dbReference>
<dbReference type="Pfam" id="PF01740">
    <property type="entry name" value="STAS"/>
    <property type="match status" value="1"/>
</dbReference>
<dbReference type="Pfam" id="PF00916">
    <property type="entry name" value="Sulfate_transp"/>
    <property type="match status" value="1"/>
</dbReference>
<dbReference type="SUPFAM" id="SSF52091">
    <property type="entry name" value="SpoIIaa-like"/>
    <property type="match status" value="1"/>
</dbReference>
<dbReference type="PROSITE" id="PS50801">
    <property type="entry name" value="STAS"/>
    <property type="match status" value="1"/>
</dbReference>
<reference key="1">
    <citation type="submission" date="2001-05" db="EMBL/GenBank/DDBJ databases">
        <title>An analysis of forty genes encoding electron transport proteins from Synechococcus sp. PCC 7002: a comparative study of electron transport proteins from cyanobacteria and chloroplasts.</title>
        <authorList>
            <person name="Nomura C.T."/>
            <person name="Persson S."/>
            <person name="Zhao J."/>
            <person name="Bryant D.A."/>
        </authorList>
    </citation>
    <scope>NUCLEOTIDE SEQUENCE [GENOMIC DNA]</scope>
    <source>
        <strain>ATCC 27264 / PCC 7002 / PR-6</strain>
    </source>
</reference>
<reference key="2">
    <citation type="submission" date="2008-02" db="EMBL/GenBank/DDBJ databases">
        <title>Complete sequence of Synechococcus sp. PCC 7002.</title>
        <authorList>
            <person name="Li T."/>
            <person name="Zhao J."/>
            <person name="Zhao C."/>
            <person name="Liu Z."/>
            <person name="Zhao F."/>
            <person name="Marquardt J."/>
            <person name="Nomura C.T."/>
            <person name="Persson S."/>
            <person name="Detter J.C."/>
            <person name="Richardson P.M."/>
            <person name="Lanz C."/>
            <person name="Schuster S.C."/>
            <person name="Wang J."/>
            <person name="Li S."/>
            <person name="Huang X."/>
            <person name="Cai T."/>
            <person name="Yu Z."/>
            <person name="Luo J."/>
            <person name="Zhao J."/>
            <person name="Bryant D.A."/>
        </authorList>
    </citation>
    <scope>NUCLEOTIDE SEQUENCE [LARGE SCALE GENOMIC DNA]</scope>
    <source>
        <strain>ATCC 27264 / PCC 7002 / PR-6</strain>
    </source>
</reference>
<reference key="3">
    <citation type="journal article" date="2004" name="Proc. Natl. Acad. Sci. U.S.A.">
        <title>Identification of a SulP-type bicarbonate transporter in marine cyanobacteria.</title>
        <authorList>
            <person name="Price G.D."/>
            <person name="Woodger F.J."/>
            <person name="Badger M.R."/>
            <person name="Howitt S.M."/>
            <person name="Tucker L."/>
        </authorList>
    </citation>
    <scope>FUNCTION</scope>
    <scope>INDUCTION</scope>
    <source>
        <strain>ATCC 27264 / PCC 7002 / PR-6</strain>
    </source>
</reference>
<reference key="4">
    <citation type="journal article" date="2010" name="Mol. Membr. Biol.">
        <title>Membrane topology of the cyanobacterial bicarbonate transporter, BicA, a member of the SulP (SLC26A) family.</title>
        <authorList>
            <person name="Shelden M.C."/>
            <person name="Howitt S.M."/>
            <person name="Price G.D."/>
        </authorList>
    </citation>
    <scope>SUBCELLULAR LOCATION</scope>
    <scope>TOPOLOGY</scope>
    <source>
        <strain>ATCC 27264 / PCC 7002 / PR-6</strain>
    </source>
</reference>
<gene>
    <name type="primary">bicA</name>
    <name type="ordered locus">SYNPCC7002_A2371</name>
</gene>
<keyword id="KW-0997">Cell inner membrane</keyword>
<keyword id="KW-1003">Cell membrane</keyword>
<keyword id="KW-0406">Ion transport</keyword>
<keyword id="KW-0472">Membrane</keyword>
<keyword id="KW-0479">Metal-binding</keyword>
<keyword id="KW-1185">Reference proteome</keyword>
<keyword id="KW-0915">Sodium</keyword>
<keyword id="KW-0739">Sodium transport</keyword>
<keyword id="KW-0812">Transmembrane</keyword>
<keyword id="KW-1133">Transmembrane helix</keyword>
<keyword id="KW-0813">Transport</keyword>
<comment type="function">
    <text evidence="4">Low/medium affinity, Na(+)-dependent bicarbonate transporter.</text>
</comment>
<comment type="subcellular location">
    <subcellularLocation>
        <location evidence="5">Cell inner membrane</location>
        <topology evidence="5">Multi-pass membrane protein</topology>
    </subcellularLocation>
</comment>
<comment type="induction">
    <text evidence="4">Induced by CO(2).</text>
</comment>
<comment type="similarity">
    <text evidence="6">Belongs to the SLC26A/SulP transporter (TC 2.A.53) family.</text>
</comment>
<accession>Q14SY0</accession>
<proteinExistence type="evidence at protein level"/>
<name>BICA_PICP2</name>
<sequence>MQITNKIHFRNIRGDIFGGLTAAVIALPMALAFGVASGAGAEAGLWGAVLVGFFAALFGGTPTLISEPTGPMTVVMTAVIAHFTASAATPEEGLAIAFTVVMMAGVFQIIFGSLKLGKYVTMMPYTVISGFMSGIGIILVILQLAPFLGQASPGGGVIGTLQNLPTLLSNIQPGETALALGTVAIIWFMPEKFKKVIPPQLVALVLGTVIAFFVFPPEVSDLRRIGEIRAGFPELVRPSFSPVEFQRMILDAAVLGMLGCIDALLTSVVADSLTRTEHNSNKELIGQGLGNLFSGLFGGIAGAGATMGTVVNIQSGGRTALSGLVRAFVLLVVILGAASLTATIPLAVLAGIAFKVGVDIIDWSFLKRAHEISPKGALIMYGVILLTVLVDLIVAVGVGVFVANVLTIERMSNLQSEKVQTVSDADDNIRLTTTEKRWLDEGQGRVLLFQLSGPMIFGVAKAIAREHNAMGDCDALVFDIGEVPHMGVTASLALENAIEEALDKERQVYIVGAAGQTRRRLEKLKLFKRVPPDKCLMSREEALKNAVLGIYPHLADGVTAPSSEMG</sequence>
<organism>
    <name type="scientific">Picosynechococcus sp. (strain ATCC 27264 / PCC 7002 / PR-6)</name>
    <name type="common">Agmenellum quadruplicatum</name>
    <dbReference type="NCBI Taxonomy" id="32049"/>
    <lineage>
        <taxon>Bacteria</taxon>
        <taxon>Bacillati</taxon>
        <taxon>Cyanobacteriota</taxon>
        <taxon>Cyanophyceae</taxon>
        <taxon>Oscillatoriophycideae</taxon>
        <taxon>Chroococcales</taxon>
        <taxon>Geminocystaceae</taxon>
        <taxon>Picosynechococcus</taxon>
    </lineage>
</organism>
<evidence type="ECO:0000250" key="1">
    <source>
        <dbReference type="UniProtKB" id="Q55415"/>
    </source>
</evidence>
<evidence type="ECO:0000255" key="2"/>
<evidence type="ECO:0000255" key="3">
    <source>
        <dbReference type="PROSITE-ProRule" id="PRU00198"/>
    </source>
</evidence>
<evidence type="ECO:0000269" key="4">
    <source>
    </source>
</evidence>
<evidence type="ECO:0000269" key="5">
    <source>
    </source>
</evidence>
<evidence type="ECO:0000305" key="6"/>
<protein>
    <recommendedName>
        <fullName>Bicarbonate transporter BicA</fullName>
    </recommendedName>
</protein>
<feature type="chain" id="PRO_0000421878" description="Bicarbonate transporter BicA">
    <location>
        <begin position="1"/>
        <end position="566"/>
    </location>
</feature>
<feature type="topological domain" description="Cytoplasmic" evidence="2">
    <location>
        <begin position="1"/>
        <end position="15"/>
    </location>
</feature>
<feature type="transmembrane region" description="Helical" evidence="2">
    <location>
        <begin position="16"/>
        <end position="36"/>
    </location>
</feature>
<feature type="topological domain" description="Periplasmic" evidence="2">
    <location>
        <begin position="37"/>
        <end position="42"/>
    </location>
</feature>
<feature type="transmembrane region" description="Helical" evidence="2">
    <location>
        <begin position="43"/>
        <end position="63"/>
    </location>
</feature>
<feature type="topological domain" description="Cytoplasmic" evidence="2">
    <location>
        <position position="64"/>
    </location>
</feature>
<feature type="transmembrane region" description="Helical" evidence="2">
    <location>
        <begin position="65"/>
        <end position="85"/>
    </location>
</feature>
<feature type="topological domain" description="Periplasmic" evidence="2">
    <location>
        <begin position="86"/>
        <end position="93"/>
    </location>
</feature>
<feature type="transmembrane region" description="Helical" evidence="2">
    <location>
        <begin position="94"/>
        <end position="114"/>
    </location>
</feature>
<feature type="topological domain" description="Cytoplasmic" evidence="2">
    <location>
        <begin position="115"/>
        <end position="126"/>
    </location>
</feature>
<feature type="transmembrane region" description="Helical" evidence="2">
    <location>
        <begin position="127"/>
        <end position="147"/>
    </location>
</feature>
<feature type="topological domain" description="Periplasmic" evidence="2">
    <location>
        <begin position="148"/>
        <end position="169"/>
    </location>
</feature>
<feature type="transmembrane region" description="Helical" evidence="2">
    <location>
        <begin position="170"/>
        <end position="190"/>
    </location>
</feature>
<feature type="topological domain" description="Cytoplasmic" evidence="2">
    <location>
        <begin position="191"/>
        <end position="196"/>
    </location>
</feature>
<feature type="transmembrane region" description="Helical" evidence="2">
    <location>
        <begin position="197"/>
        <end position="217"/>
    </location>
</feature>
<feature type="topological domain" description="Periplasmic" evidence="2">
    <location>
        <begin position="218"/>
        <end position="247"/>
    </location>
</feature>
<feature type="transmembrane region" description="Helical" evidence="2">
    <location>
        <begin position="248"/>
        <end position="268"/>
    </location>
</feature>
<feature type="topological domain" description="Cytoplasmic" evidence="2">
    <location>
        <begin position="269"/>
        <end position="318"/>
    </location>
</feature>
<feature type="transmembrane region" description="Helical" evidence="2">
    <location>
        <begin position="319"/>
        <end position="339"/>
    </location>
</feature>
<feature type="topological domain" description="Periplasmic" evidence="2">
    <location>
        <position position="340"/>
    </location>
</feature>
<feature type="transmembrane region" description="Helical" evidence="2">
    <location>
        <begin position="341"/>
        <end position="361"/>
    </location>
</feature>
<feature type="topological domain" description="Cytoplasmic" evidence="2">
    <location>
        <begin position="362"/>
        <end position="371"/>
    </location>
</feature>
<feature type="transmembrane region" description="Helical" evidence="2">
    <location>
        <begin position="372"/>
        <end position="392"/>
    </location>
</feature>
<feature type="topological domain" description="Periplasmic" evidence="2">
    <location>
        <position position="393"/>
    </location>
</feature>
<feature type="transmembrane region" description="Helical" evidence="2">
    <location>
        <begin position="394"/>
        <end position="414"/>
    </location>
</feature>
<feature type="topological domain" description="Cytoplasmic" evidence="2">
    <location>
        <begin position="415"/>
        <end position="566"/>
    </location>
</feature>
<feature type="domain" description="STAS" evidence="3">
    <location>
        <begin position="436"/>
        <end position="546"/>
    </location>
</feature>
<feature type="binding site" evidence="1">
    <location>
        <position position="69"/>
    </location>
    <ligand>
        <name>hydrogencarbonate</name>
        <dbReference type="ChEBI" id="CHEBI:17544"/>
    </ligand>
</feature>
<feature type="binding site" evidence="1">
    <location>
        <position position="262"/>
    </location>
    <ligand>
        <name>Na(+)</name>
        <dbReference type="ChEBI" id="CHEBI:29101"/>
    </ligand>
</feature>
<feature type="binding site" evidence="1">
    <location>
        <position position="266"/>
    </location>
    <ligand>
        <name>Na(+)</name>
        <dbReference type="ChEBI" id="CHEBI:29101"/>
    </ligand>
</feature>
<feature type="binding site" evidence="1">
    <location>
        <position position="304"/>
    </location>
    <ligand>
        <name>Na(+)</name>
        <dbReference type="ChEBI" id="CHEBI:29101"/>
    </ligand>
</feature>
<feature type="binding site" evidence="1">
    <location>
        <position position="305"/>
    </location>
    <ligand>
        <name>hydrogencarbonate</name>
        <dbReference type="ChEBI" id="CHEBI:17544"/>
    </ligand>
</feature>
<feature type="binding site" evidence="1">
    <location>
        <position position="306"/>
    </location>
    <ligand>
        <name>Na(+)</name>
        <dbReference type="ChEBI" id="CHEBI:29101"/>
    </ligand>
</feature>